<dbReference type="EC" id="3.1.3.16"/>
<dbReference type="EMBL" id="X57439">
    <property type="protein sequence ID" value="CAA40687.1"/>
    <property type="molecule type" value="mRNA"/>
</dbReference>
<dbReference type="PIR" id="S12986">
    <property type="entry name" value="S12986"/>
</dbReference>
<dbReference type="SMR" id="P23778"/>
<dbReference type="GO" id="GO:0046872">
    <property type="term" value="F:metal ion binding"/>
    <property type="evidence" value="ECO:0007669"/>
    <property type="project" value="UniProtKB-KW"/>
</dbReference>
<dbReference type="GO" id="GO:0004722">
    <property type="term" value="F:protein serine/threonine phosphatase activity"/>
    <property type="evidence" value="ECO:0007669"/>
    <property type="project" value="UniProtKB-EC"/>
</dbReference>
<dbReference type="CDD" id="cd07415">
    <property type="entry name" value="MPP_PP2A_PP4_PP6"/>
    <property type="match status" value="1"/>
</dbReference>
<dbReference type="FunFam" id="3.60.21.10:FF:000003">
    <property type="entry name" value="Serine/threonine-protein phosphatase"/>
    <property type="match status" value="1"/>
</dbReference>
<dbReference type="Gene3D" id="3.60.21.10">
    <property type="match status" value="1"/>
</dbReference>
<dbReference type="InterPro" id="IPR004843">
    <property type="entry name" value="Calcineurin-like_PHP_ApaH"/>
</dbReference>
<dbReference type="InterPro" id="IPR029052">
    <property type="entry name" value="Metallo-depent_PP-like"/>
</dbReference>
<dbReference type="InterPro" id="IPR047129">
    <property type="entry name" value="PPA2-like"/>
</dbReference>
<dbReference type="InterPro" id="IPR006186">
    <property type="entry name" value="Ser/Thr-sp_prot-phosphatase"/>
</dbReference>
<dbReference type="PANTHER" id="PTHR45619">
    <property type="entry name" value="SERINE/THREONINE-PROTEIN PHOSPHATASE PP2A-RELATED"/>
    <property type="match status" value="1"/>
</dbReference>
<dbReference type="Pfam" id="PF00149">
    <property type="entry name" value="Metallophos"/>
    <property type="match status" value="1"/>
</dbReference>
<dbReference type="PRINTS" id="PR00114">
    <property type="entry name" value="STPHPHTASE"/>
</dbReference>
<dbReference type="SMART" id="SM00156">
    <property type="entry name" value="PP2Ac"/>
    <property type="match status" value="1"/>
</dbReference>
<dbReference type="SUPFAM" id="SSF56300">
    <property type="entry name" value="Metallo-dependent phosphatases"/>
    <property type="match status" value="1"/>
</dbReference>
<dbReference type="PROSITE" id="PS00125">
    <property type="entry name" value="SER_THR_PHOSPHATASE"/>
    <property type="match status" value="1"/>
</dbReference>
<organism>
    <name type="scientific">Brassica napus</name>
    <name type="common">Rape</name>
    <dbReference type="NCBI Taxonomy" id="3708"/>
    <lineage>
        <taxon>Eukaryota</taxon>
        <taxon>Viridiplantae</taxon>
        <taxon>Streptophyta</taxon>
        <taxon>Embryophyta</taxon>
        <taxon>Tracheophyta</taxon>
        <taxon>Spermatophyta</taxon>
        <taxon>Magnoliopsida</taxon>
        <taxon>eudicotyledons</taxon>
        <taxon>Gunneridae</taxon>
        <taxon>Pentapetalae</taxon>
        <taxon>rosids</taxon>
        <taxon>malvids</taxon>
        <taxon>Brassicales</taxon>
        <taxon>Brassicaceae</taxon>
        <taxon>Brassiceae</taxon>
        <taxon>Brassica</taxon>
    </lineage>
</organism>
<protein>
    <recommendedName>
        <fullName>Serine/threonine-protein phosphatase PP2A catalytic subunit</fullName>
        <ecNumber>3.1.3.16</ecNumber>
    </recommendedName>
</protein>
<feature type="chain" id="PRO_0000058857" description="Serine/threonine-protein phosphatase PP2A catalytic subunit">
    <location>
        <begin position="1" status="less than"/>
        <end position="309"/>
    </location>
</feature>
<feature type="active site" description="Proton donor" evidence="1">
    <location>
        <position position="118"/>
    </location>
</feature>
<feature type="binding site" evidence="1">
    <location>
        <position position="57"/>
    </location>
    <ligand>
        <name>Mn(2+)</name>
        <dbReference type="ChEBI" id="CHEBI:29035"/>
        <label>1</label>
    </ligand>
</feature>
<feature type="binding site" evidence="1">
    <location>
        <position position="59"/>
    </location>
    <ligand>
        <name>Mn(2+)</name>
        <dbReference type="ChEBI" id="CHEBI:29035"/>
        <label>1</label>
    </ligand>
</feature>
<feature type="binding site" evidence="1">
    <location>
        <position position="85"/>
    </location>
    <ligand>
        <name>Mn(2+)</name>
        <dbReference type="ChEBI" id="CHEBI:29035"/>
        <label>1</label>
    </ligand>
</feature>
<feature type="binding site" evidence="1">
    <location>
        <position position="85"/>
    </location>
    <ligand>
        <name>Mn(2+)</name>
        <dbReference type="ChEBI" id="CHEBI:29035"/>
        <label>2</label>
    </ligand>
</feature>
<feature type="binding site" evidence="1">
    <location>
        <position position="117"/>
    </location>
    <ligand>
        <name>Mn(2+)</name>
        <dbReference type="ChEBI" id="CHEBI:29035"/>
        <label>2</label>
    </ligand>
</feature>
<feature type="binding site" evidence="1">
    <location>
        <position position="167"/>
    </location>
    <ligand>
        <name>Mn(2+)</name>
        <dbReference type="ChEBI" id="CHEBI:29035"/>
        <label>2</label>
    </ligand>
</feature>
<feature type="binding site" evidence="1">
    <location>
        <position position="241"/>
    </location>
    <ligand>
        <name>Mn(2+)</name>
        <dbReference type="ChEBI" id="CHEBI:29035"/>
        <label>2</label>
    </ligand>
</feature>
<feature type="non-terminal residue">
    <location>
        <position position="1"/>
    </location>
</feature>
<evidence type="ECO:0000250" key="1"/>
<evidence type="ECO:0000305" key="2"/>
<reference key="1">
    <citation type="journal article" date="1990" name="FEBS Lett.">
        <title>Identification by molecular cloning of two cDNA sequences from the plant Brassica napus which are very similar to mammalian protein phosphatases-1 and -2A.</title>
        <authorList>
            <person name="Mackintosh R.W."/>
            <person name="Haycox G."/>
            <person name="Hardie D.G."/>
            <person name="Cohen P.T.W."/>
        </authorList>
    </citation>
    <scope>NUCLEOTIDE SEQUENCE [MRNA]</scope>
</reference>
<name>PP2A_BRANA</name>
<accession>P23778</accession>
<sequence length="309" mass="35176">SIPTDATLDLDEQISQLMQCKPLSEQQVRALCEKAKEILMDESNVQPVKSPVTICGDIHGQFHDLAELFRIGGMCPDTNYLFMGDYVDRGYYSVETVTLLVGLKVRYPQRITILRGNHESRQITQVYGFYDECLRKYGNANVWKYFTDLFDYLPLTALVESEIFCLHGGLSPSIETLDNIRNFDRVQEVPHGGPMCDLLWSDPDDRCGWGISPRGAGYTFGQDISNQFNHSNSLKLISRAHQLVMDGYNWAHEAKGGTIFSAPNYCYRCGNMASILEVDDCRNHTFIQFEPAPRRGEPDVTRRTPDYFL</sequence>
<comment type="catalytic activity">
    <reaction>
        <text>O-phospho-L-seryl-[protein] + H2O = L-seryl-[protein] + phosphate</text>
        <dbReference type="Rhea" id="RHEA:20629"/>
        <dbReference type="Rhea" id="RHEA-COMP:9863"/>
        <dbReference type="Rhea" id="RHEA-COMP:11604"/>
        <dbReference type="ChEBI" id="CHEBI:15377"/>
        <dbReference type="ChEBI" id="CHEBI:29999"/>
        <dbReference type="ChEBI" id="CHEBI:43474"/>
        <dbReference type="ChEBI" id="CHEBI:83421"/>
        <dbReference type="EC" id="3.1.3.16"/>
    </reaction>
</comment>
<comment type="catalytic activity">
    <reaction>
        <text>O-phospho-L-threonyl-[protein] + H2O = L-threonyl-[protein] + phosphate</text>
        <dbReference type="Rhea" id="RHEA:47004"/>
        <dbReference type="Rhea" id="RHEA-COMP:11060"/>
        <dbReference type="Rhea" id="RHEA-COMP:11605"/>
        <dbReference type="ChEBI" id="CHEBI:15377"/>
        <dbReference type="ChEBI" id="CHEBI:30013"/>
        <dbReference type="ChEBI" id="CHEBI:43474"/>
        <dbReference type="ChEBI" id="CHEBI:61977"/>
        <dbReference type="EC" id="3.1.3.16"/>
    </reaction>
</comment>
<comment type="cofactor">
    <cofactor evidence="1">
        <name>Mn(2+)</name>
        <dbReference type="ChEBI" id="CHEBI:29035"/>
    </cofactor>
    <text evidence="1">Binds 2 manganese ions per subunit.</text>
</comment>
<comment type="similarity">
    <text evidence="2">Belongs to the PPP phosphatase family. PP-2A subfamily.</text>
</comment>
<keyword id="KW-0378">Hydrolase</keyword>
<keyword id="KW-0464">Manganese</keyword>
<keyword id="KW-0479">Metal-binding</keyword>
<keyword id="KW-0904">Protein phosphatase</keyword>
<proteinExistence type="evidence at transcript level"/>